<organism>
    <name type="scientific">Burkholderia pseudomallei (strain K96243)</name>
    <dbReference type="NCBI Taxonomy" id="272560"/>
    <lineage>
        <taxon>Bacteria</taxon>
        <taxon>Pseudomonadati</taxon>
        <taxon>Pseudomonadota</taxon>
        <taxon>Betaproteobacteria</taxon>
        <taxon>Burkholderiales</taxon>
        <taxon>Burkholderiaceae</taxon>
        <taxon>Burkholderia</taxon>
        <taxon>pseudomallei group</taxon>
    </lineage>
</organism>
<gene>
    <name type="ordered locus">BPSL2566</name>
</gene>
<sequence length="208" mass="21947">MSHASPDAARSRIVLASNNPGKLREFAALFSTAGIDIVPQGELGVSEADEPHATFVENALAKARHASRATGLPAVADDSGLCVPALLGAPGVYSARYAQRAGREKSDAANNAYLVEQLREVADRRAYYYCVLALVRHADDPEPLIAEGRWAGEIVDAPRGAHGFGYDPHFFVPALGATAAELDPAAKNAASHRALALKALVARLGEIR</sequence>
<reference key="1">
    <citation type="journal article" date="2004" name="Proc. Natl. Acad. Sci. U.S.A.">
        <title>Genomic plasticity of the causative agent of melioidosis, Burkholderia pseudomallei.</title>
        <authorList>
            <person name="Holden M.T.G."/>
            <person name="Titball R.W."/>
            <person name="Peacock S.J."/>
            <person name="Cerdeno-Tarraga A.-M."/>
            <person name="Atkins T."/>
            <person name="Crossman L.C."/>
            <person name="Pitt T."/>
            <person name="Churcher C."/>
            <person name="Mungall K.L."/>
            <person name="Bentley S.D."/>
            <person name="Sebaihia M."/>
            <person name="Thomson N.R."/>
            <person name="Bason N."/>
            <person name="Beacham I.R."/>
            <person name="Brooks K."/>
            <person name="Brown K.A."/>
            <person name="Brown N.F."/>
            <person name="Challis G.L."/>
            <person name="Cherevach I."/>
            <person name="Chillingworth T."/>
            <person name="Cronin A."/>
            <person name="Crossett B."/>
            <person name="Davis P."/>
            <person name="DeShazer D."/>
            <person name="Feltwell T."/>
            <person name="Fraser A."/>
            <person name="Hance Z."/>
            <person name="Hauser H."/>
            <person name="Holroyd S."/>
            <person name="Jagels K."/>
            <person name="Keith K.E."/>
            <person name="Maddison M."/>
            <person name="Moule S."/>
            <person name="Price C."/>
            <person name="Quail M.A."/>
            <person name="Rabbinowitsch E."/>
            <person name="Rutherford K."/>
            <person name="Sanders M."/>
            <person name="Simmonds M."/>
            <person name="Songsivilai S."/>
            <person name="Stevens K."/>
            <person name="Tumapa S."/>
            <person name="Vesaratchavest M."/>
            <person name="Whitehead S."/>
            <person name="Yeats C."/>
            <person name="Barrell B.G."/>
            <person name="Oyston P.C.F."/>
            <person name="Parkhill J."/>
        </authorList>
    </citation>
    <scope>NUCLEOTIDE SEQUENCE [LARGE SCALE GENOMIC DNA]</scope>
    <source>
        <strain>K96243</strain>
    </source>
</reference>
<keyword id="KW-0378">Hydrolase</keyword>
<keyword id="KW-0460">Magnesium</keyword>
<keyword id="KW-0479">Metal-binding</keyword>
<keyword id="KW-0546">Nucleotide metabolism</keyword>
<keyword id="KW-0547">Nucleotide-binding</keyword>
<keyword id="KW-1185">Reference proteome</keyword>
<comment type="function">
    <text evidence="1">Pyrophosphatase that catalyzes the hydrolysis of nucleoside triphosphates to their monophosphate derivatives, with a high preference for the non-canonical purine nucleotides XTP (xanthosine triphosphate), dITP (deoxyinosine triphosphate) and ITP. Seems to function as a house-cleaning enzyme that removes non-canonical purine nucleotides from the nucleotide pool, thus preventing their incorporation into DNA/RNA and avoiding chromosomal lesions.</text>
</comment>
<comment type="catalytic activity">
    <reaction evidence="1">
        <text>XTP + H2O = XMP + diphosphate + H(+)</text>
        <dbReference type="Rhea" id="RHEA:28610"/>
        <dbReference type="ChEBI" id="CHEBI:15377"/>
        <dbReference type="ChEBI" id="CHEBI:15378"/>
        <dbReference type="ChEBI" id="CHEBI:33019"/>
        <dbReference type="ChEBI" id="CHEBI:57464"/>
        <dbReference type="ChEBI" id="CHEBI:61314"/>
        <dbReference type="EC" id="3.6.1.66"/>
    </reaction>
</comment>
<comment type="catalytic activity">
    <reaction evidence="1">
        <text>dITP + H2O = dIMP + diphosphate + H(+)</text>
        <dbReference type="Rhea" id="RHEA:28342"/>
        <dbReference type="ChEBI" id="CHEBI:15377"/>
        <dbReference type="ChEBI" id="CHEBI:15378"/>
        <dbReference type="ChEBI" id="CHEBI:33019"/>
        <dbReference type="ChEBI" id="CHEBI:61194"/>
        <dbReference type="ChEBI" id="CHEBI:61382"/>
        <dbReference type="EC" id="3.6.1.66"/>
    </reaction>
</comment>
<comment type="catalytic activity">
    <reaction evidence="1">
        <text>ITP + H2O = IMP + diphosphate + H(+)</text>
        <dbReference type="Rhea" id="RHEA:29399"/>
        <dbReference type="ChEBI" id="CHEBI:15377"/>
        <dbReference type="ChEBI" id="CHEBI:15378"/>
        <dbReference type="ChEBI" id="CHEBI:33019"/>
        <dbReference type="ChEBI" id="CHEBI:58053"/>
        <dbReference type="ChEBI" id="CHEBI:61402"/>
        <dbReference type="EC" id="3.6.1.66"/>
    </reaction>
</comment>
<comment type="cofactor">
    <cofactor evidence="1">
        <name>Mg(2+)</name>
        <dbReference type="ChEBI" id="CHEBI:18420"/>
    </cofactor>
    <text evidence="1">Binds 1 Mg(2+) ion per subunit.</text>
</comment>
<comment type="subunit">
    <text evidence="1">Homodimer.</text>
</comment>
<comment type="similarity">
    <text evidence="1">Belongs to the HAM1 NTPase family.</text>
</comment>
<protein>
    <recommendedName>
        <fullName evidence="1">dITP/XTP pyrophosphatase</fullName>
        <ecNumber evidence="1">3.6.1.66</ecNumber>
    </recommendedName>
    <alternativeName>
        <fullName evidence="1">Non-canonical purine NTP pyrophosphatase</fullName>
    </alternativeName>
    <alternativeName>
        <fullName evidence="1">Non-standard purine NTP pyrophosphatase</fullName>
    </alternativeName>
    <alternativeName>
        <fullName evidence="1">Nucleoside-triphosphate diphosphatase</fullName>
    </alternativeName>
    <alternativeName>
        <fullName evidence="1">Nucleoside-triphosphate pyrophosphatase</fullName>
        <shortName evidence="1">NTPase</shortName>
    </alternativeName>
</protein>
<proteinExistence type="inferred from homology"/>
<name>IXTPA_BURPS</name>
<dbReference type="EC" id="3.6.1.66" evidence="1"/>
<dbReference type="EMBL" id="BX571965">
    <property type="protein sequence ID" value="CAH36574.1"/>
    <property type="molecule type" value="Genomic_DNA"/>
</dbReference>
<dbReference type="RefSeq" id="YP_109163.1">
    <property type="nucleotide sequence ID" value="NC_006350.1"/>
</dbReference>
<dbReference type="SMR" id="Q63RV4"/>
<dbReference type="STRING" id="272560.BPSL2566"/>
<dbReference type="KEGG" id="bps:BPSL2566"/>
<dbReference type="PATRIC" id="fig|272560.51.peg.2798"/>
<dbReference type="eggNOG" id="COG0127">
    <property type="taxonomic scope" value="Bacteria"/>
</dbReference>
<dbReference type="Proteomes" id="UP000000605">
    <property type="component" value="Chromosome 1"/>
</dbReference>
<dbReference type="GO" id="GO:0005829">
    <property type="term" value="C:cytosol"/>
    <property type="evidence" value="ECO:0007669"/>
    <property type="project" value="TreeGrafter"/>
</dbReference>
<dbReference type="GO" id="GO:0035870">
    <property type="term" value="F:dITP diphosphatase activity"/>
    <property type="evidence" value="ECO:0007669"/>
    <property type="project" value="RHEA"/>
</dbReference>
<dbReference type="GO" id="GO:0036220">
    <property type="term" value="F:ITP diphosphatase activity"/>
    <property type="evidence" value="ECO:0007669"/>
    <property type="project" value="UniProtKB-EC"/>
</dbReference>
<dbReference type="GO" id="GO:0046872">
    <property type="term" value="F:metal ion binding"/>
    <property type="evidence" value="ECO:0007669"/>
    <property type="project" value="UniProtKB-KW"/>
</dbReference>
<dbReference type="GO" id="GO:0000166">
    <property type="term" value="F:nucleotide binding"/>
    <property type="evidence" value="ECO:0007669"/>
    <property type="project" value="UniProtKB-KW"/>
</dbReference>
<dbReference type="GO" id="GO:0017111">
    <property type="term" value="F:ribonucleoside triphosphate phosphatase activity"/>
    <property type="evidence" value="ECO:0007669"/>
    <property type="project" value="InterPro"/>
</dbReference>
<dbReference type="GO" id="GO:0036222">
    <property type="term" value="F:XTP diphosphatase activity"/>
    <property type="evidence" value="ECO:0007669"/>
    <property type="project" value="RHEA"/>
</dbReference>
<dbReference type="GO" id="GO:0009117">
    <property type="term" value="P:nucleotide metabolic process"/>
    <property type="evidence" value="ECO:0007669"/>
    <property type="project" value="UniProtKB-KW"/>
</dbReference>
<dbReference type="GO" id="GO:0009146">
    <property type="term" value="P:purine nucleoside triphosphate catabolic process"/>
    <property type="evidence" value="ECO:0007669"/>
    <property type="project" value="UniProtKB-UniRule"/>
</dbReference>
<dbReference type="CDD" id="cd00515">
    <property type="entry name" value="HAM1"/>
    <property type="match status" value="1"/>
</dbReference>
<dbReference type="FunFam" id="3.90.950.10:FF:000001">
    <property type="entry name" value="dITP/XTP pyrophosphatase"/>
    <property type="match status" value="1"/>
</dbReference>
<dbReference type="Gene3D" id="3.90.950.10">
    <property type="match status" value="1"/>
</dbReference>
<dbReference type="HAMAP" id="MF_01405">
    <property type="entry name" value="Non_canon_purine_NTPase"/>
    <property type="match status" value="1"/>
</dbReference>
<dbReference type="InterPro" id="IPR020922">
    <property type="entry name" value="dITP/XTP_pyrophosphatase"/>
</dbReference>
<dbReference type="InterPro" id="IPR029001">
    <property type="entry name" value="ITPase-like_fam"/>
</dbReference>
<dbReference type="InterPro" id="IPR002637">
    <property type="entry name" value="RdgB/HAM1"/>
</dbReference>
<dbReference type="NCBIfam" id="TIGR00042">
    <property type="entry name" value="RdgB/HAM1 family non-canonical purine NTP pyrophosphatase"/>
    <property type="match status" value="1"/>
</dbReference>
<dbReference type="PANTHER" id="PTHR11067:SF9">
    <property type="entry name" value="INOSINE TRIPHOSPHATE PYROPHOSPHATASE"/>
    <property type="match status" value="1"/>
</dbReference>
<dbReference type="PANTHER" id="PTHR11067">
    <property type="entry name" value="INOSINE TRIPHOSPHATE PYROPHOSPHATASE/HAM1 PROTEIN"/>
    <property type="match status" value="1"/>
</dbReference>
<dbReference type="Pfam" id="PF01725">
    <property type="entry name" value="Ham1p_like"/>
    <property type="match status" value="1"/>
</dbReference>
<dbReference type="SUPFAM" id="SSF52972">
    <property type="entry name" value="ITPase-like"/>
    <property type="match status" value="1"/>
</dbReference>
<accession>Q63RV4</accession>
<feature type="chain" id="PRO_0000178144" description="dITP/XTP pyrophosphatase">
    <location>
        <begin position="1"/>
        <end position="208"/>
    </location>
</feature>
<feature type="active site" description="Proton acceptor" evidence="1">
    <location>
        <position position="78"/>
    </location>
</feature>
<feature type="binding site" evidence="1">
    <location>
        <begin position="17"/>
        <end position="22"/>
    </location>
    <ligand>
        <name>substrate</name>
    </ligand>
</feature>
<feature type="binding site" evidence="1">
    <location>
        <position position="49"/>
    </location>
    <ligand>
        <name>Mg(2+)</name>
        <dbReference type="ChEBI" id="CHEBI:18420"/>
    </ligand>
</feature>
<feature type="binding site" evidence="1">
    <location>
        <position position="78"/>
    </location>
    <ligand>
        <name>Mg(2+)</name>
        <dbReference type="ChEBI" id="CHEBI:18420"/>
    </ligand>
</feature>
<feature type="binding site" evidence="1">
    <location>
        <position position="79"/>
    </location>
    <ligand>
        <name>substrate</name>
    </ligand>
</feature>
<feature type="binding site" evidence="1">
    <location>
        <begin position="164"/>
        <end position="167"/>
    </location>
    <ligand>
        <name>substrate</name>
    </ligand>
</feature>
<feature type="binding site" evidence="1">
    <location>
        <position position="187"/>
    </location>
    <ligand>
        <name>substrate</name>
    </ligand>
</feature>
<feature type="binding site" evidence="1">
    <location>
        <begin position="192"/>
        <end position="193"/>
    </location>
    <ligand>
        <name>substrate</name>
    </ligand>
</feature>
<evidence type="ECO:0000255" key="1">
    <source>
        <dbReference type="HAMAP-Rule" id="MF_01405"/>
    </source>
</evidence>